<dbReference type="EMBL" id="EF044213">
    <property type="protein sequence ID" value="ABJ89685.1"/>
    <property type="molecule type" value="Genomic_DNA"/>
</dbReference>
<dbReference type="RefSeq" id="YP_817488.1">
    <property type="nucleotide sequence ID" value="NC_008535.1"/>
</dbReference>
<dbReference type="SMR" id="A0A341"/>
<dbReference type="GeneID" id="4421769"/>
<dbReference type="OrthoDB" id="423436at2759"/>
<dbReference type="Proteomes" id="UP000515148">
    <property type="component" value="Chloroplast Pltd"/>
</dbReference>
<dbReference type="GO" id="GO:0009535">
    <property type="term" value="C:chloroplast thylakoid membrane"/>
    <property type="evidence" value="ECO:0007669"/>
    <property type="project" value="UniProtKB-SubCell"/>
</dbReference>
<dbReference type="GO" id="GO:0045259">
    <property type="term" value="C:proton-transporting ATP synthase complex"/>
    <property type="evidence" value="ECO:0007669"/>
    <property type="project" value="UniProtKB-KW"/>
</dbReference>
<dbReference type="GO" id="GO:0005524">
    <property type="term" value="F:ATP binding"/>
    <property type="evidence" value="ECO:0007669"/>
    <property type="project" value="UniProtKB-UniRule"/>
</dbReference>
<dbReference type="GO" id="GO:0046933">
    <property type="term" value="F:proton-transporting ATP synthase activity, rotational mechanism"/>
    <property type="evidence" value="ECO:0007669"/>
    <property type="project" value="UniProtKB-UniRule"/>
</dbReference>
<dbReference type="CDD" id="cd12152">
    <property type="entry name" value="F1-ATPase_delta"/>
    <property type="match status" value="1"/>
</dbReference>
<dbReference type="FunFam" id="2.60.15.10:FF:000002">
    <property type="entry name" value="ATP synthase epsilon chain, chloroplastic"/>
    <property type="match status" value="1"/>
</dbReference>
<dbReference type="Gene3D" id="6.10.140.480">
    <property type="match status" value="1"/>
</dbReference>
<dbReference type="Gene3D" id="2.60.15.10">
    <property type="entry name" value="F0F1 ATP synthase delta/epsilon subunit, N-terminal"/>
    <property type="match status" value="1"/>
</dbReference>
<dbReference type="HAMAP" id="MF_00530">
    <property type="entry name" value="ATP_synth_epsil_bac"/>
    <property type="match status" value="1"/>
</dbReference>
<dbReference type="InterPro" id="IPR001469">
    <property type="entry name" value="ATP_synth_F1_dsu/esu"/>
</dbReference>
<dbReference type="InterPro" id="IPR020546">
    <property type="entry name" value="ATP_synth_F1_dsu/esu_N"/>
</dbReference>
<dbReference type="InterPro" id="IPR020547">
    <property type="entry name" value="ATP_synth_F1_esu_C"/>
</dbReference>
<dbReference type="InterPro" id="IPR036771">
    <property type="entry name" value="ATPsynth_dsu/esu_N"/>
</dbReference>
<dbReference type="NCBIfam" id="TIGR01216">
    <property type="entry name" value="ATP_synt_epsi"/>
    <property type="match status" value="1"/>
</dbReference>
<dbReference type="PANTHER" id="PTHR13822">
    <property type="entry name" value="ATP SYNTHASE DELTA/EPSILON CHAIN"/>
    <property type="match status" value="1"/>
</dbReference>
<dbReference type="PANTHER" id="PTHR13822:SF10">
    <property type="entry name" value="ATP SYNTHASE EPSILON CHAIN, CHLOROPLASTIC"/>
    <property type="match status" value="1"/>
</dbReference>
<dbReference type="Pfam" id="PF00401">
    <property type="entry name" value="ATP-synt_DE"/>
    <property type="match status" value="1"/>
</dbReference>
<dbReference type="Pfam" id="PF02823">
    <property type="entry name" value="ATP-synt_DE_N"/>
    <property type="match status" value="1"/>
</dbReference>
<dbReference type="SUPFAM" id="SSF51344">
    <property type="entry name" value="Epsilon subunit of F1F0-ATP synthase N-terminal domain"/>
    <property type="match status" value="1"/>
</dbReference>
<sequence>MTLNLCVLTPNRIVWDSEVKEIILPTNSGQIGVLPNHAPIATAVDIGILRIRLNGQWLTMALMGGFAKIGSNEIIVLVNDAEKGSDIDPQEAQQTLEIAEANLKKAEGKRQTIEANLALRRARTRVEAINAV</sequence>
<keyword id="KW-0066">ATP synthesis</keyword>
<keyword id="KW-0139">CF(1)</keyword>
<keyword id="KW-0150">Chloroplast</keyword>
<keyword id="KW-0375">Hydrogen ion transport</keyword>
<keyword id="KW-0406">Ion transport</keyword>
<keyword id="KW-0472">Membrane</keyword>
<keyword id="KW-0934">Plastid</keyword>
<keyword id="KW-1185">Reference proteome</keyword>
<keyword id="KW-0793">Thylakoid</keyword>
<keyword id="KW-0813">Transport</keyword>
<comment type="function">
    <text evidence="1">Produces ATP from ADP in the presence of a proton gradient across the membrane.</text>
</comment>
<comment type="subunit">
    <text evidence="1">F-type ATPases have 2 components, CF(1) - the catalytic core - and CF(0) - the membrane proton channel. CF(1) has five subunits: alpha(3), beta(3), gamma(1), delta(1), epsilon(1). CF(0) has three main subunits: a, b and c.</text>
</comment>
<comment type="subcellular location">
    <subcellularLocation>
        <location evidence="1">Plastid</location>
        <location evidence="1">Chloroplast thylakoid membrane</location>
        <topology evidence="1">Peripheral membrane protein</topology>
    </subcellularLocation>
</comment>
<comment type="similarity">
    <text evidence="1">Belongs to the ATPase epsilon chain family.</text>
</comment>
<proteinExistence type="inferred from homology"/>
<reference key="1">
    <citation type="journal article" date="2007" name="Plant Biotechnol. J.">
        <title>The complete nucleotide sequence of the coffee (Coffea arabica L.) chloroplast genome: organization and implications for biotechnology and phylogenetic relationships amongst angiosperms.</title>
        <authorList>
            <person name="Samson N."/>
            <person name="Bausher M.G."/>
            <person name="Lee S.-B."/>
            <person name="Jansen R.K."/>
            <person name="Daniell H."/>
        </authorList>
    </citation>
    <scope>NUCLEOTIDE SEQUENCE [LARGE SCALE GENOMIC DNA]</scope>
</reference>
<evidence type="ECO:0000255" key="1">
    <source>
        <dbReference type="HAMAP-Rule" id="MF_00530"/>
    </source>
</evidence>
<name>ATPE_COFAR</name>
<organism>
    <name type="scientific">Coffea arabica</name>
    <name type="common">Arabian coffee</name>
    <dbReference type="NCBI Taxonomy" id="13443"/>
    <lineage>
        <taxon>Eukaryota</taxon>
        <taxon>Viridiplantae</taxon>
        <taxon>Streptophyta</taxon>
        <taxon>Embryophyta</taxon>
        <taxon>Tracheophyta</taxon>
        <taxon>Spermatophyta</taxon>
        <taxon>Magnoliopsida</taxon>
        <taxon>eudicotyledons</taxon>
        <taxon>Gunneridae</taxon>
        <taxon>Pentapetalae</taxon>
        <taxon>asterids</taxon>
        <taxon>lamiids</taxon>
        <taxon>Gentianales</taxon>
        <taxon>Rubiaceae</taxon>
        <taxon>Ixoroideae</taxon>
        <taxon>Gardenieae complex</taxon>
        <taxon>Bertiereae - Coffeeae clade</taxon>
        <taxon>Coffeeae</taxon>
        <taxon>Coffea</taxon>
    </lineage>
</organism>
<gene>
    <name evidence="1" type="primary">atpE</name>
</gene>
<geneLocation type="chloroplast"/>
<protein>
    <recommendedName>
        <fullName evidence="1">ATP synthase epsilon chain, chloroplastic</fullName>
    </recommendedName>
    <alternativeName>
        <fullName evidence="1">ATP synthase F1 sector epsilon subunit</fullName>
    </alternativeName>
    <alternativeName>
        <fullName evidence="1">F-ATPase epsilon subunit</fullName>
    </alternativeName>
</protein>
<accession>A0A341</accession>
<feature type="chain" id="PRO_0000275194" description="ATP synthase epsilon chain, chloroplastic">
    <location>
        <begin position="1"/>
        <end position="132"/>
    </location>
</feature>